<protein>
    <recommendedName>
        <fullName evidence="2">Decapping and exoribonuclease protein</fullName>
        <shortName evidence="2">DXO</shortName>
        <ecNumber evidence="1">3.6.1.-</ecNumber>
    </recommendedName>
    <alternativeName>
        <fullName evidence="4">5'-3' exoribonuclease DXO</fullName>
        <ecNumber evidence="1">3.1.13.-</ecNumber>
    </alternativeName>
    <alternativeName>
        <fullName evidence="2">Dom-3 homolog Z</fullName>
    </alternativeName>
    <alternativeName>
        <fullName evidence="4">NAD-capped RNA hydrolase DXO</fullName>
        <shortName evidence="4">DeNADding enzyme DXO</shortName>
        <ecNumber evidence="1">3.6.1.-</ecNumber>
    </alternativeName>
</protein>
<comment type="function">
    <text evidence="1">Decapping enzyme for NAD-capped RNAs: specifically hydrolyzes the nicotinamide adenine dinucleotide (NAD) cap from a subset of RNAs by removing the entire NAD moiety from the 5'-end of an NAD-capped RNA. The NAD-cap is present at the 5'-end of some RNAs and snoRNAs. In contrast to the canonical 5'-end N7 methylguanosine (m7G) cap, the NAD cap promotes mRNA decay. Also acts as a non-canonical decapping enzyme that removes the entire cap structure of m7G capped or incompletely capped RNAs and mediates their subsequent degradation. Specifically degrades pre-mRNAs with a defective 5'-end m7G cap and is part of a pre-mRNA capping quality control. Has decapping activity toward incomplete 5'-end m7G cap mRNAs such as unmethylated 5'-end-capped RNA (cap0), while it has no activity toward 2'-O-ribose methylated m7G cap (cap1). Also has 5'-3' exoribonuclease activities: The 5'-end monophosphate RNA is then degraded by the 5'-3' exoribonuclease activity, enabling this enzyme to decap and degrade incompletely capped mRNAs. Also possesses RNA 5'-pyrophosphohydrolase activity by hydrolyzing the 5'-end triphosphate to release pyrophosphates. Exhibits decapping activity towards FAD-capped RNAs (By similarity). Exhibits decapping activity towards dpCoA-capped RNAs in vitro (By similarity).</text>
</comment>
<comment type="catalytic activity">
    <reaction evidence="1">
        <text>a 5'-end triphospho-ribonucleoside in mRNA + H2O = a 5'-end phospho-ribonucleoside in mRNA + diphosphate + H(+)</text>
        <dbReference type="Rhea" id="RHEA:78683"/>
        <dbReference type="Rhea" id="RHEA-COMP:15692"/>
        <dbReference type="Rhea" id="RHEA-COMP:17164"/>
        <dbReference type="ChEBI" id="CHEBI:15377"/>
        <dbReference type="ChEBI" id="CHEBI:15378"/>
        <dbReference type="ChEBI" id="CHEBI:33019"/>
        <dbReference type="ChEBI" id="CHEBI:138282"/>
        <dbReference type="ChEBI" id="CHEBI:167618"/>
    </reaction>
    <physiologicalReaction direction="left-to-right" evidence="1">
        <dbReference type="Rhea" id="RHEA:78684"/>
    </physiologicalReaction>
</comment>
<comment type="catalytic activity">
    <reaction evidence="1">
        <text>a 5'-end NAD(+)-phospho-ribonucleoside in mRNA + H2O = a 5'-end phospho-ribonucleoside in mRNA + NAD(+) + H(+)</text>
        <dbReference type="Rhea" id="RHEA:60880"/>
        <dbReference type="Rhea" id="RHEA-COMP:15692"/>
        <dbReference type="Rhea" id="RHEA-COMP:15698"/>
        <dbReference type="ChEBI" id="CHEBI:15377"/>
        <dbReference type="ChEBI" id="CHEBI:15378"/>
        <dbReference type="ChEBI" id="CHEBI:57540"/>
        <dbReference type="ChEBI" id="CHEBI:138282"/>
        <dbReference type="ChEBI" id="CHEBI:144029"/>
    </reaction>
    <physiologicalReaction direction="left-to-right" evidence="1">
        <dbReference type="Rhea" id="RHEA:60881"/>
    </physiologicalReaction>
</comment>
<comment type="catalytic activity">
    <reaction evidence="1">
        <text>a 5'-end NAD(+)-phospho-ribonucleoside in snoRNA + H2O = a 5'-end phospho-ribonucleoside in snoRNA + NAD(+) + H(+)</text>
        <dbReference type="Rhea" id="RHEA:60892"/>
        <dbReference type="Rhea" id="RHEA-COMP:15699"/>
        <dbReference type="Rhea" id="RHEA-COMP:15700"/>
        <dbReference type="ChEBI" id="CHEBI:15377"/>
        <dbReference type="ChEBI" id="CHEBI:15378"/>
        <dbReference type="ChEBI" id="CHEBI:57540"/>
        <dbReference type="ChEBI" id="CHEBI:138282"/>
        <dbReference type="ChEBI" id="CHEBI:144029"/>
    </reaction>
    <physiologicalReaction direction="left-to-right" evidence="1">
        <dbReference type="Rhea" id="RHEA:60893"/>
    </physiologicalReaction>
</comment>
<comment type="catalytic activity">
    <reaction evidence="1">
        <text>a 5'-end (N(7)-methyl 5'-triphosphoguanosine)-ribonucleoside-ribonucleotide in mRNA + H2O = a (N(7)-methyl 5'-triphosphoguanosine)-nucleoside + a 5'-end phospho-ribonucleoside in mRNA + H(+)</text>
        <dbReference type="Rhea" id="RHEA:66928"/>
        <dbReference type="Rhea" id="RHEA-COMP:15692"/>
        <dbReference type="Rhea" id="RHEA-COMP:17313"/>
        <dbReference type="ChEBI" id="CHEBI:15377"/>
        <dbReference type="ChEBI" id="CHEBI:15378"/>
        <dbReference type="ChEBI" id="CHEBI:138282"/>
        <dbReference type="ChEBI" id="CHEBI:172876"/>
        <dbReference type="ChEBI" id="CHEBI:172877"/>
    </reaction>
    <physiologicalReaction direction="left-to-right" evidence="1">
        <dbReference type="Rhea" id="RHEA:66929"/>
    </physiologicalReaction>
</comment>
<comment type="catalytic activity">
    <reaction evidence="1">
        <text>a 5'-end FAD-phospho-ribonucleoside in mRNA + H2O = a 5'-end phospho-ribonucleoside in mRNA + FAD + H(+)</text>
        <dbReference type="Rhea" id="RHEA:67492"/>
        <dbReference type="Rhea" id="RHEA-COMP:15692"/>
        <dbReference type="Rhea" id="RHEA-COMP:17275"/>
        <dbReference type="ChEBI" id="CHEBI:15377"/>
        <dbReference type="ChEBI" id="CHEBI:15378"/>
        <dbReference type="ChEBI" id="CHEBI:57692"/>
        <dbReference type="ChEBI" id="CHEBI:138282"/>
        <dbReference type="ChEBI" id="CHEBI:172372"/>
    </reaction>
    <physiologicalReaction direction="left-to-right" evidence="1">
        <dbReference type="Rhea" id="RHEA:67493"/>
    </physiologicalReaction>
</comment>
<comment type="catalytic activity">
    <reaction evidence="1">
        <text>a 5'-end CoA-ribonucleoside in mRNA + H2O = 3'-dephospho-CoA + a 5'-end phospho-ribonucleoside in mRNA + H(+)</text>
        <dbReference type="Rhea" id="RHEA:67496"/>
        <dbReference type="Rhea" id="RHEA-COMP:15692"/>
        <dbReference type="Rhea" id="RHEA-COMP:17276"/>
        <dbReference type="ChEBI" id="CHEBI:15377"/>
        <dbReference type="ChEBI" id="CHEBI:15378"/>
        <dbReference type="ChEBI" id="CHEBI:57328"/>
        <dbReference type="ChEBI" id="CHEBI:138282"/>
        <dbReference type="ChEBI" id="CHEBI:172371"/>
    </reaction>
    <physiologicalReaction direction="left-to-right" evidence="1">
        <dbReference type="Rhea" id="RHEA:67497"/>
    </physiologicalReaction>
</comment>
<comment type="cofactor">
    <cofactor evidence="1">
        <name>Mg(2+)</name>
        <dbReference type="ChEBI" id="CHEBI:18420"/>
    </cofactor>
    <text evidence="1">Binds 2 magnesium ions.</text>
</comment>
<comment type="subcellular location">
    <subcellularLocation>
        <location evidence="2">Nucleus</location>
    </subcellularLocation>
</comment>
<comment type="similarity">
    <text evidence="4">Belongs to the DXO/Dom3Z family.</text>
</comment>
<gene>
    <name evidence="2" type="primary">dxo</name>
    <name evidence="2" type="synonym">dom3z</name>
</gene>
<feature type="chain" id="PRO_0000249825" description="Decapping and exoribonuclease protein">
    <location>
        <begin position="1"/>
        <end position="401"/>
    </location>
</feature>
<feature type="region of interest" description="Disordered" evidence="3">
    <location>
        <begin position="1"/>
        <end position="27"/>
    </location>
</feature>
<feature type="compositionally biased region" description="Basic and acidic residues" evidence="3">
    <location>
        <begin position="7"/>
        <end position="20"/>
    </location>
</feature>
<feature type="binding site" evidence="1">
    <location>
        <position position="69"/>
    </location>
    <ligand>
        <name>substrate</name>
    </ligand>
</feature>
<feature type="binding site" evidence="1">
    <location>
        <position position="114"/>
    </location>
    <ligand>
        <name>substrate</name>
    </ligand>
</feature>
<feature type="binding site" evidence="1">
    <location>
        <begin position="149"/>
        <end position="151"/>
    </location>
    <ligand>
        <name>substrate</name>
    </ligand>
</feature>
<feature type="binding site" evidence="1">
    <location>
        <position position="210"/>
    </location>
    <ligand>
        <name>Mg(2+)</name>
        <dbReference type="ChEBI" id="CHEBI:18420"/>
        <label>1</label>
    </ligand>
</feature>
<feature type="binding site" evidence="1">
    <location>
        <position position="210"/>
    </location>
    <ligand>
        <name>Mg(2+)</name>
        <dbReference type="ChEBI" id="CHEBI:18420"/>
        <label>2</label>
    </ligand>
</feature>
<feature type="binding site" evidence="1">
    <location>
        <position position="235"/>
    </location>
    <ligand>
        <name>substrate</name>
    </ligand>
</feature>
<feature type="binding site" evidence="1">
    <location>
        <position position="252"/>
    </location>
    <ligand>
        <name>Mg(2+)</name>
        <dbReference type="ChEBI" id="CHEBI:18420"/>
        <label>2</label>
    </ligand>
</feature>
<feature type="binding site" evidence="1">
    <location>
        <position position="252"/>
    </location>
    <ligand>
        <name>substrate</name>
    </ligand>
</feature>
<feature type="binding site" evidence="1">
    <location>
        <position position="254"/>
    </location>
    <ligand>
        <name>Mg(2+)</name>
        <dbReference type="ChEBI" id="CHEBI:18420"/>
        <label>1</label>
    </ligand>
</feature>
<feature type="binding site" evidence="1">
    <location>
        <position position="254"/>
    </location>
    <ligand>
        <name>Mg(2+)</name>
        <dbReference type="ChEBI" id="CHEBI:18420"/>
        <label>2</label>
    </ligand>
</feature>
<feature type="binding site" evidence="1">
    <location>
        <position position="271"/>
    </location>
    <ligand>
        <name>Mg(2+)</name>
        <dbReference type="ChEBI" id="CHEBI:18420"/>
        <label>1</label>
    </ligand>
</feature>
<feature type="binding site" evidence="1">
    <location>
        <position position="272"/>
    </location>
    <ligand>
        <name>Mg(2+)</name>
        <dbReference type="ChEBI" id="CHEBI:18420"/>
        <label>1</label>
    </ligand>
</feature>
<feature type="binding site" evidence="1">
    <location>
        <position position="273"/>
    </location>
    <ligand>
        <name>substrate</name>
    </ligand>
</feature>
<feature type="binding site" evidence="1">
    <location>
        <position position="298"/>
    </location>
    <ligand>
        <name>substrate</name>
    </ligand>
</feature>
<name>DXO_XENLA</name>
<dbReference type="EC" id="3.6.1.-" evidence="1"/>
<dbReference type="EC" id="3.1.13.-" evidence="1"/>
<dbReference type="EMBL" id="BC088900">
    <property type="protein sequence ID" value="AAH88900.1"/>
    <property type="molecule type" value="mRNA"/>
</dbReference>
<dbReference type="RefSeq" id="NP_001088937.1">
    <property type="nucleotide sequence ID" value="NM_001095468.1"/>
</dbReference>
<dbReference type="SMR" id="Q5HZT0"/>
<dbReference type="DNASU" id="496313"/>
<dbReference type="GeneID" id="496313"/>
<dbReference type="KEGG" id="xla:496313"/>
<dbReference type="AGR" id="Xenbase:XB-GENE-6252096"/>
<dbReference type="CTD" id="496313"/>
<dbReference type="Xenbase" id="XB-GENE-6252096">
    <property type="gene designation" value="dxo.L"/>
</dbReference>
<dbReference type="OrthoDB" id="5853397at2759"/>
<dbReference type="Proteomes" id="UP000186698">
    <property type="component" value="Chromosome 8L"/>
</dbReference>
<dbReference type="Bgee" id="496313">
    <property type="expression patterns" value="Expressed in neurula embryo and 19 other cell types or tissues"/>
</dbReference>
<dbReference type="GO" id="GO:0005829">
    <property type="term" value="C:cytosol"/>
    <property type="evidence" value="ECO:0000318"/>
    <property type="project" value="GO_Central"/>
</dbReference>
<dbReference type="GO" id="GO:0005634">
    <property type="term" value="C:nucleus"/>
    <property type="evidence" value="ECO:0000250"/>
    <property type="project" value="UniProtKB"/>
</dbReference>
<dbReference type="GO" id="GO:0008409">
    <property type="term" value="F:5'-3' exonuclease activity"/>
    <property type="evidence" value="ECO:0000250"/>
    <property type="project" value="UniProtKB"/>
</dbReference>
<dbReference type="GO" id="GO:0000287">
    <property type="term" value="F:magnesium ion binding"/>
    <property type="evidence" value="ECO:0000250"/>
    <property type="project" value="UniProtKB"/>
</dbReference>
<dbReference type="GO" id="GO:0034353">
    <property type="term" value="F:mRNA 5'-diphosphatase activity"/>
    <property type="evidence" value="ECO:0000250"/>
    <property type="project" value="UniProtKB"/>
</dbReference>
<dbReference type="GO" id="GO:0003729">
    <property type="term" value="F:mRNA binding"/>
    <property type="evidence" value="ECO:0000250"/>
    <property type="project" value="UniProtKB"/>
</dbReference>
<dbReference type="GO" id="GO:0000166">
    <property type="term" value="F:nucleotide binding"/>
    <property type="evidence" value="ECO:0007669"/>
    <property type="project" value="UniProtKB-KW"/>
</dbReference>
<dbReference type="GO" id="GO:0110152">
    <property type="term" value="F:RNA NAD+-cap (NAD+-forming) hydrolase activity"/>
    <property type="evidence" value="ECO:0000250"/>
    <property type="project" value="UniProtKB"/>
</dbReference>
<dbReference type="GO" id="GO:0006402">
    <property type="term" value="P:mRNA catabolic process"/>
    <property type="evidence" value="ECO:0000250"/>
    <property type="project" value="UniProtKB"/>
</dbReference>
<dbReference type="GO" id="GO:0110155">
    <property type="term" value="P:NAD-cap decapping"/>
    <property type="evidence" value="ECO:0000250"/>
    <property type="project" value="UniProtKB"/>
</dbReference>
<dbReference type="GO" id="GO:0071028">
    <property type="term" value="P:nuclear mRNA surveillance"/>
    <property type="evidence" value="ECO:0000250"/>
    <property type="project" value="UniProtKB"/>
</dbReference>
<dbReference type="GO" id="GO:0000956">
    <property type="term" value="P:nuclear-transcribed mRNA catabolic process"/>
    <property type="evidence" value="ECO:0000318"/>
    <property type="project" value="GO_Central"/>
</dbReference>
<dbReference type="GO" id="GO:0090304">
    <property type="term" value="P:nucleic acid metabolic process"/>
    <property type="evidence" value="ECO:0000250"/>
    <property type="project" value="UniProtKB"/>
</dbReference>
<dbReference type="GO" id="GO:0050779">
    <property type="term" value="P:RNA destabilization"/>
    <property type="evidence" value="ECO:0000250"/>
    <property type="project" value="UniProtKB"/>
</dbReference>
<dbReference type="InterPro" id="IPR013961">
    <property type="entry name" value="RAI1"/>
</dbReference>
<dbReference type="InterPro" id="IPR039039">
    <property type="entry name" value="RAI1-like_fam"/>
</dbReference>
<dbReference type="PANTHER" id="PTHR12395:SF9">
    <property type="entry name" value="DECAPPING AND EXORIBONUCLEASE PROTEIN"/>
    <property type="match status" value="1"/>
</dbReference>
<dbReference type="PANTHER" id="PTHR12395">
    <property type="entry name" value="DOM-3 RELATED"/>
    <property type="match status" value="1"/>
</dbReference>
<dbReference type="Pfam" id="PF08652">
    <property type="entry name" value="RAI1"/>
    <property type="match status" value="1"/>
</dbReference>
<reference key="1">
    <citation type="submission" date="2005-01" db="EMBL/GenBank/DDBJ databases">
        <authorList>
            <consortium name="NIH - Xenopus Gene Collection (XGC) project"/>
        </authorList>
    </citation>
    <scope>NUCLEOTIDE SEQUENCE [LARGE SCALE MRNA]</scope>
    <source>
        <tissue>Egg</tissue>
    </source>
</reference>
<evidence type="ECO:0000250" key="1">
    <source>
        <dbReference type="UniProtKB" id="O70348"/>
    </source>
</evidence>
<evidence type="ECO:0000250" key="2">
    <source>
        <dbReference type="UniProtKB" id="O77932"/>
    </source>
</evidence>
<evidence type="ECO:0000256" key="3">
    <source>
        <dbReference type="SAM" id="MobiDB-lite"/>
    </source>
</evidence>
<evidence type="ECO:0000305" key="4"/>
<sequence>MEGNKSMQREKIDRPMKRGPEQNSLSPPLAKCPFMSCSSLKTLHSLYQGSFPFYRLPSEVGHFSLDENRQYHQDNRKLRYYSPPVGIREKGSPGWNVMDGYESHYVRRNEDEKEGLLHILTWLEKNRGVLGAHVEGGSKRPIDRDFVTWRGHLTKILCTPYETQEGWLLAVTLFKGTFYISEQETEAAQKKRKERSLEQERLMYSGYKFESYICADSPDRQPSQSAVVNTNEGFCSVLLARLTSHSLLISGEVDCTDPSAKKSIPPTCYIELKSSAQIRNPHQQRSFNRYKLLKWWCQSFLLGIPIIVAGFRSPEGRIVSLETFKTSDIPHLVRGERNSWDPAVCMNFCNKFLSHIKSVVTRDDPRLVYLFAWEPGCDVTFTVHTDPEYTILPSWYVNSVN</sequence>
<keyword id="KW-0269">Exonuclease</keyword>
<keyword id="KW-0378">Hydrolase</keyword>
<keyword id="KW-0460">Magnesium</keyword>
<keyword id="KW-0479">Metal-binding</keyword>
<keyword id="KW-0540">Nuclease</keyword>
<keyword id="KW-0547">Nucleotide-binding</keyword>
<keyword id="KW-0539">Nucleus</keyword>
<keyword id="KW-1185">Reference proteome</keyword>
<keyword id="KW-0694">RNA-binding</keyword>
<organism>
    <name type="scientific">Xenopus laevis</name>
    <name type="common">African clawed frog</name>
    <dbReference type="NCBI Taxonomy" id="8355"/>
    <lineage>
        <taxon>Eukaryota</taxon>
        <taxon>Metazoa</taxon>
        <taxon>Chordata</taxon>
        <taxon>Craniata</taxon>
        <taxon>Vertebrata</taxon>
        <taxon>Euteleostomi</taxon>
        <taxon>Amphibia</taxon>
        <taxon>Batrachia</taxon>
        <taxon>Anura</taxon>
        <taxon>Pipoidea</taxon>
        <taxon>Pipidae</taxon>
        <taxon>Xenopodinae</taxon>
        <taxon>Xenopus</taxon>
        <taxon>Xenopus</taxon>
    </lineage>
</organism>
<accession>Q5HZT0</accession>
<proteinExistence type="evidence at transcript level"/>